<comment type="function">
    <text evidence="1">Usually encoded in the trnK tRNA gene intron. Probably assists in splicing its own and other chloroplast group II introns.</text>
</comment>
<comment type="subcellular location">
    <subcellularLocation>
        <location>Plastid</location>
        <location>Chloroplast</location>
    </subcellularLocation>
</comment>
<comment type="similarity">
    <text evidence="1">Belongs to the intron maturase 2 family. MatK subfamily.</text>
</comment>
<organism>
    <name type="scientific">Phoenix dactylifera</name>
    <name type="common">Date palm</name>
    <dbReference type="NCBI Taxonomy" id="42345"/>
    <lineage>
        <taxon>Eukaryota</taxon>
        <taxon>Viridiplantae</taxon>
        <taxon>Streptophyta</taxon>
        <taxon>Embryophyta</taxon>
        <taxon>Tracheophyta</taxon>
        <taxon>Spermatophyta</taxon>
        <taxon>Magnoliopsida</taxon>
        <taxon>Liliopsida</taxon>
        <taxon>Arecaceae</taxon>
        <taxon>Coryphoideae</taxon>
        <taxon>Phoeniceae</taxon>
        <taxon>Phoenix</taxon>
    </lineage>
</organism>
<keyword id="KW-0150">Chloroplast</keyword>
<keyword id="KW-0507">mRNA processing</keyword>
<keyword id="KW-0934">Plastid</keyword>
<keyword id="KW-1185">Reference proteome</keyword>
<keyword id="KW-0694">RNA-binding</keyword>
<keyword id="KW-0819">tRNA processing</keyword>
<proteinExistence type="inferred from homology"/>
<sequence length="514" mass="61484">MEELQGYLEKDRSRQQHFLYPLLFKEYIYTFVHDRGLNSSVFYESTEIFGYDNKSSSVLVKRSIIRMYQQNYLIYSVNDSNQNRFVGHNNYFYFHFYSQMILEGFAVIVEIPFLLRLVSSLEEKKIPKSQNLNLRSIHSTFPFLEDKLSHLNYVSDILIPYPIHLKILVQILQFWIQDVPSLHLLRFFLHEYHNWNSLITPNNSIFLFSKENKRVFRFPYNSYVSECEFVLVFLRKQSSYLRVTSSGAFLERTHFYGKIEHRIVVRRNYFQKTLWFFKDPFMHYVRYQGKAILVSKGTHLLMKKWKCYLVNFWQYYFHFWSQPYRIHINQLSNCSFYFLGYLSSVLINPSAVRNQMLENSFLIDTVIKKFDTRVPVITLIGSLSKAKFCTVLGHPISKPIWTDLSDCDINDRFGRICRNLSHYHSGSSKKQSLYRIKYILRFSCAXTLARKHKSTVRAFLQRLGSGLLEEFFMKEEQVVSLIFPKTTSFSLHESHIERIWYLDIIHINDLVNYS</sequence>
<gene>
    <name evidence="1" type="primary">matK</name>
</gene>
<reference key="1">
    <citation type="journal article" date="2000" name="Plant Biol.">
        <title>A phylogenetic analysis of the plastid matK gene with emphasis on Melanthiaceae sensu lato.</title>
        <authorList>
            <person name="Fuse S."/>
            <person name="Tamura M.N."/>
        </authorList>
    </citation>
    <scope>NUCLEOTIDE SEQUENCE [GENOMIC DNA]</scope>
</reference>
<accession>Q9GHB2</accession>
<protein>
    <recommendedName>
        <fullName evidence="1">Maturase K</fullName>
    </recommendedName>
    <alternativeName>
        <fullName evidence="1">Intron maturase</fullName>
    </alternativeName>
</protein>
<geneLocation type="chloroplast"/>
<feature type="chain" id="PRO_0000143589" description="Maturase K">
    <location>
        <begin position="1"/>
        <end position="514"/>
    </location>
</feature>
<evidence type="ECO:0000255" key="1">
    <source>
        <dbReference type="HAMAP-Rule" id="MF_01390"/>
    </source>
</evidence>
<dbReference type="EMBL" id="AB040211">
    <property type="protein sequence ID" value="BAB16819.1"/>
    <property type="molecule type" value="Genomic_DNA"/>
</dbReference>
<dbReference type="Proteomes" id="UP000228380">
    <property type="component" value="Unplaced"/>
</dbReference>
<dbReference type="GO" id="GO:0009507">
    <property type="term" value="C:chloroplast"/>
    <property type="evidence" value="ECO:0007669"/>
    <property type="project" value="UniProtKB-SubCell"/>
</dbReference>
<dbReference type="GO" id="GO:0003723">
    <property type="term" value="F:RNA binding"/>
    <property type="evidence" value="ECO:0007669"/>
    <property type="project" value="UniProtKB-KW"/>
</dbReference>
<dbReference type="GO" id="GO:0006397">
    <property type="term" value="P:mRNA processing"/>
    <property type="evidence" value="ECO:0007669"/>
    <property type="project" value="UniProtKB-KW"/>
</dbReference>
<dbReference type="GO" id="GO:0008380">
    <property type="term" value="P:RNA splicing"/>
    <property type="evidence" value="ECO:0007669"/>
    <property type="project" value="UniProtKB-UniRule"/>
</dbReference>
<dbReference type="GO" id="GO:0008033">
    <property type="term" value="P:tRNA processing"/>
    <property type="evidence" value="ECO:0007669"/>
    <property type="project" value="UniProtKB-KW"/>
</dbReference>
<dbReference type="HAMAP" id="MF_01390">
    <property type="entry name" value="MatK"/>
    <property type="match status" value="1"/>
</dbReference>
<dbReference type="InterPro" id="IPR024937">
    <property type="entry name" value="Domain_X"/>
</dbReference>
<dbReference type="InterPro" id="IPR002866">
    <property type="entry name" value="Maturase_MatK"/>
</dbReference>
<dbReference type="InterPro" id="IPR024942">
    <property type="entry name" value="Maturase_MatK_N"/>
</dbReference>
<dbReference type="PANTHER" id="PTHR34811">
    <property type="entry name" value="MATURASE K"/>
    <property type="match status" value="1"/>
</dbReference>
<dbReference type="PANTHER" id="PTHR34811:SF1">
    <property type="entry name" value="MATURASE K"/>
    <property type="match status" value="1"/>
</dbReference>
<dbReference type="Pfam" id="PF01348">
    <property type="entry name" value="Intron_maturas2"/>
    <property type="match status" value="1"/>
</dbReference>
<dbReference type="Pfam" id="PF01824">
    <property type="entry name" value="MatK_N"/>
    <property type="match status" value="1"/>
</dbReference>
<name>MATK_PHODC</name>